<keyword id="KW-0285">Flavoprotein</keyword>
<keyword id="KW-0288">FMN</keyword>
<keyword id="KW-0520">NAD</keyword>
<keyword id="KW-0560">Oxidoreductase</keyword>
<comment type="function">
    <text evidence="1">Quinone reductase that provides resistance to thiol-specific stress caused by electrophilic quinones.</text>
</comment>
<comment type="function">
    <text evidence="1">Also exhibits azoreductase activity. Catalyzes the reductive cleavage of the azo bond in aromatic azo compounds to the corresponding amines.</text>
</comment>
<comment type="catalytic activity">
    <reaction evidence="1">
        <text>2 a quinone + NADH + H(+) = 2 a 1,4-benzosemiquinone + NAD(+)</text>
        <dbReference type="Rhea" id="RHEA:65952"/>
        <dbReference type="ChEBI" id="CHEBI:15378"/>
        <dbReference type="ChEBI" id="CHEBI:57540"/>
        <dbReference type="ChEBI" id="CHEBI:57945"/>
        <dbReference type="ChEBI" id="CHEBI:132124"/>
        <dbReference type="ChEBI" id="CHEBI:134225"/>
    </reaction>
</comment>
<comment type="catalytic activity">
    <reaction evidence="1">
        <text>N,N-dimethyl-1,4-phenylenediamine + anthranilate + 2 NAD(+) = 2-(4-dimethylaminophenyl)diazenylbenzoate + 2 NADH + 2 H(+)</text>
        <dbReference type="Rhea" id="RHEA:55872"/>
        <dbReference type="ChEBI" id="CHEBI:15378"/>
        <dbReference type="ChEBI" id="CHEBI:15783"/>
        <dbReference type="ChEBI" id="CHEBI:16567"/>
        <dbReference type="ChEBI" id="CHEBI:57540"/>
        <dbReference type="ChEBI" id="CHEBI:57945"/>
        <dbReference type="ChEBI" id="CHEBI:71579"/>
        <dbReference type="EC" id="1.7.1.17"/>
    </reaction>
</comment>
<comment type="cofactor">
    <cofactor evidence="1">
        <name>FMN</name>
        <dbReference type="ChEBI" id="CHEBI:58210"/>
    </cofactor>
    <text evidence="1">Binds 1 FMN per subunit.</text>
</comment>
<comment type="subunit">
    <text evidence="1">Homodimer.</text>
</comment>
<comment type="similarity">
    <text evidence="1">Belongs to the azoreductase type 1 family.</text>
</comment>
<reference key="1">
    <citation type="journal article" date="2009" name="J. Bacteriol.">
        <title>Genome sequence of Azotobacter vinelandii, an obligate aerobe specialized to support diverse anaerobic metabolic processes.</title>
        <authorList>
            <person name="Setubal J.C."/>
            <person name="Dos Santos P."/>
            <person name="Goldman B.S."/>
            <person name="Ertesvaag H."/>
            <person name="Espin G."/>
            <person name="Rubio L.M."/>
            <person name="Valla S."/>
            <person name="Almeida N.F."/>
            <person name="Balasubramanian D."/>
            <person name="Cromes L."/>
            <person name="Curatti L."/>
            <person name="Du Z."/>
            <person name="Godsy E."/>
            <person name="Goodner B."/>
            <person name="Hellner-Burris K."/>
            <person name="Hernandez J.A."/>
            <person name="Houmiel K."/>
            <person name="Imperial J."/>
            <person name="Kennedy C."/>
            <person name="Larson T.J."/>
            <person name="Latreille P."/>
            <person name="Ligon L.S."/>
            <person name="Lu J."/>
            <person name="Maerk M."/>
            <person name="Miller N.M."/>
            <person name="Norton S."/>
            <person name="O'Carroll I.P."/>
            <person name="Paulsen I."/>
            <person name="Raulfs E.C."/>
            <person name="Roemer R."/>
            <person name="Rosser J."/>
            <person name="Segura D."/>
            <person name="Slater S."/>
            <person name="Stricklin S.L."/>
            <person name="Studholme D.J."/>
            <person name="Sun J."/>
            <person name="Viana C.J."/>
            <person name="Wallin E."/>
            <person name="Wang B."/>
            <person name="Wheeler C."/>
            <person name="Zhu H."/>
            <person name="Dean D.R."/>
            <person name="Dixon R."/>
            <person name="Wood D."/>
        </authorList>
    </citation>
    <scope>NUCLEOTIDE SEQUENCE [LARGE SCALE GENOMIC DNA]</scope>
    <source>
        <strain>DJ / ATCC BAA-1303</strain>
    </source>
</reference>
<protein>
    <recommendedName>
        <fullName evidence="1">FMN-dependent NADH:quinone oxidoreductase</fullName>
        <ecNumber evidence="1">1.6.5.-</ecNumber>
    </recommendedName>
    <alternativeName>
        <fullName evidence="1">Azo-dye reductase</fullName>
    </alternativeName>
    <alternativeName>
        <fullName evidence="1">FMN-dependent NADH-azo compound oxidoreductase</fullName>
    </alternativeName>
    <alternativeName>
        <fullName evidence="1">FMN-dependent NADH-azoreductase</fullName>
        <ecNumber evidence="1">1.7.1.17</ecNumber>
    </alternativeName>
</protein>
<sequence length="199" mass="21637">MSRVLVIESSARQEGSVSRQLTAEFLARWKAAHPNDEIVVRDLANEPVPHLDIDLLGGWTKPAEQQSEAEKAALARSERLTGELLGADVLVLAAPMYNFAIPSTLKAWLDHVLRAGVTFKYTENGPQGLLSGKRAFVLTARGGIYAGSPLDHQEPYLRQALGFIGIHDVSFIHAEGLNMGGDFQQKGLARAKEKLAQVA</sequence>
<accession>C1DED8</accession>
<gene>
    <name evidence="1" type="primary">azoR</name>
    <name type="ordered locus">Avin_19110</name>
</gene>
<evidence type="ECO:0000255" key="1">
    <source>
        <dbReference type="HAMAP-Rule" id="MF_01216"/>
    </source>
</evidence>
<proteinExistence type="inferred from homology"/>
<dbReference type="EC" id="1.6.5.-" evidence="1"/>
<dbReference type="EC" id="1.7.1.17" evidence="1"/>
<dbReference type="EMBL" id="CP001157">
    <property type="protein sequence ID" value="ACO78123.1"/>
    <property type="molecule type" value="Genomic_DNA"/>
</dbReference>
<dbReference type="RefSeq" id="WP_012700532.1">
    <property type="nucleotide sequence ID" value="NC_012560.1"/>
</dbReference>
<dbReference type="SMR" id="C1DED8"/>
<dbReference type="STRING" id="322710.Avin_19110"/>
<dbReference type="EnsemblBacteria" id="ACO78123">
    <property type="protein sequence ID" value="ACO78123"/>
    <property type="gene ID" value="Avin_19110"/>
</dbReference>
<dbReference type="GeneID" id="88185149"/>
<dbReference type="KEGG" id="avn:Avin_19110"/>
<dbReference type="eggNOG" id="COG1182">
    <property type="taxonomic scope" value="Bacteria"/>
</dbReference>
<dbReference type="HOGENOM" id="CLU_088964_0_0_6"/>
<dbReference type="OrthoDB" id="9787136at2"/>
<dbReference type="Proteomes" id="UP000002424">
    <property type="component" value="Chromosome"/>
</dbReference>
<dbReference type="GO" id="GO:0009055">
    <property type="term" value="F:electron transfer activity"/>
    <property type="evidence" value="ECO:0007669"/>
    <property type="project" value="UniProtKB-UniRule"/>
</dbReference>
<dbReference type="GO" id="GO:0010181">
    <property type="term" value="F:FMN binding"/>
    <property type="evidence" value="ECO:0007669"/>
    <property type="project" value="UniProtKB-UniRule"/>
</dbReference>
<dbReference type="GO" id="GO:0016652">
    <property type="term" value="F:oxidoreductase activity, acting on NAD(P)H as acceptor"/>
    <property type="evidence" value="ECO:0007669"/>
    <property type="project" value="UniProtKB-UniRule"/>
</dbReference>
<dbReference type="GO" id="GO:0016655">
    <property type="term" value="F:oxidoreductase activity, acting on NAD(P)H, quinone or similar compound as acceptor"/>
    <property type="evidence" value="ECO:0007669"/>
    <property type="project" value="InterPro"/>
</dbReference>
<dbReference type="Gene3D" id="3.40.50.360">
    <property type="match status" value="1"/>
</dbReference>
<dbReference type="HAMAP" id="MF_01216">
    <property type="entry name" value="Azoreductase_type1"/>
    <property type="match status" value="1"/>
</dbReference>
<dbReference type="InterPro" id="IPR003680">
    <property type="entry name" value="Flavodoxin_fold"/>
</dbReference>
<dbReference type="InterPro" id="IPR029039">
    <property type="entry name" value="Flavoprotein-like_sf"/>
</dbReference>
<dbReference type="InterPro" id="IPR050104">
    <property type="entry name" value="FMN-dep_NADH:Q_OxRdtase_AzoR1"/>
</dbReference>
<dbReference type="InterPro" id="IPR023048">
    <property type="entry name" value="NADH:quinone_OxRdtase_FMN_depd"/>
</dbReference>
<dbReference type="PANTHER" id="PTHR43741">
    <property type="entry name" value="FMN-DEPENDENT NADH-AZOREDUCTASE 1"/>
    <property type="match status" value="1"/>
</dbReference>
<dbReference type="PANTHER" id="PTHR43741:SF2">
    <property type="entry name" value="FMN-DEPENDENT NADH:QUINONE OXIDOREDUCTASE"/>
    <property type="match status" value="1"/>
</dbReference>
<dbReference type="Pfam" id="PF02525">
    <property type="entry name" value="Flavodoxin_2"/>
    <property type="match status" value="1"/>
</dbReference>
<dbReference type="SUPFAM" id="SSF52218">
    <property type="entry name" value="Flavoproteins"/>
    <property type="match status" value="1"/>
</dbReference>
<feature type="chain" id="PRO_1000213897" description="FMN-dependent NADH:quinone oxidoreductase">
    <location>
        <begin position="1"/>
        <end position="199"/>
    </location>
</feature>
<feature type="binding site" evidence="1">
    <location>
        <position position="10"/>
    </location>
    <ligand>
        <name>FMN</name>
        <dbReference type="ChEBI" id="CHEBI:58210"/>
    </ligand>
</feature>
<feature type="binding site" evidence="1">
    <location>
        <begin position="16"/>
        <end position="18"/>
    </location>
    <ligand>
        <name>FMN</name>
        <dbReference type="ChEBI" id="CHEBI:58210"/>
    </ligand>
</feature>
<feature type="binding site" evidence="1">
    <location>
        <begin position="96"/>
        <end position="99"/>
    </location>
    <ligand>
        <name>FMN</name>
        <dbReference type="ChEBI" id="CHEBI:58210"/>
    </ligand>
</feature>
<organism>
    <name type="scientific">Azotobacter vinelandii (strain DJ / ATCC BAA-1303)</name>
    <dbReference type="NCBI Taxonomy" id="322710"/>
    <lineage>
        <taxon>Bacteria</taxon>
        <taxon>Pseudomonadati</taxon>
        <taxon>Pseudomonadota</taxon>
        <taxon>Gammaproteobacteria</taxon>
        <taxon>Pseudomonadales</taxon>
        <taxon>Pseudomonadaceae</taxon>
        <taxon>Azotobacter</taxon>
    </lineage>
</organism>
<name>AZOR_AZOVD</name>